<keyword id="KW-1015">Disulfide bond</keyword>
<keyword id="KW-0676">Redox-active center</keyword>
<keyword id="KW-1185">Reference proteome</keyword>
<keyword id="KW-0732">Signal</keyword>
<accession>Q89AD2</accession>
<dbReference type="EMBL" id="AE016826">
    <property type="protein sequence ID" value="AAO27093.1"/>
    <property type="molecule type" value="Genomic_DNA"/>
</dbReference>
<dbReference type="RefSeq" id="WP_011091494.1">
    <property type="nucleotide sequence ID" value="NC_004545.1"/>
</dbReference>
<dbReference type="SMR" id="Q89AD2"/>
<dbReference type="STRING" id="224915.bbp_381"/>
<dbReference type="KEGG" id="bab:bbp_381"/>
<dbReference type="eggNOG" id="COG1651">
    <property type="taxonomic scope" value="Bacteria"/>
</dbReference>
<dbReference type="HOGENOM" id="CLU_088255_3_0_6"/>
<dbReference type="OrthoDB" id="9784896at2"/>
<dbReference type="Proteomes" id="UP000000601">
    <property type="component" value="Chromosome"/>
</dbReference>
<dbReference type="CDD" id="cd03019">
    <property type="entry name" value="DsbA_DsbA"/>
    <property type="match status" value="1"/>
</dbReference>
<dbReference type="Gene3D" id="3.40.30.10">
    <property type="entry name" value="Glutaredoxin"/>
    <property type="match status" value="1"/>
</dbReference>
<dbReference type="InterPro" id="IPR023205">
    <property type="entry name" value="DsbA/DsbL"/>
</dbReference>
<dbReference type="InterPro" id="IPR050824">
    <property type="entry name" value="Thiol_disulfide_DsbA"/>
</dbReference>
<dbReference type="InterPro" id="IPR036249">
    <property type="entry name" value="Thioredoxin-like_sf"/>
</dbReference>
<dbReference type="PANTHER" id="PTHR35891">
    <property type="entry name" value="THIOL:DISULFIDE INTERCHANGE PROTEIN DSBA"/>
    <property type="match status" value="1"/>
</dbReference>
<dbReference type="PANTHER" id="PTHR35891:SF2">
    <property type="entry name" value="THIOL:DISULFIDE INTERCHANGE PROTEIN DSBA"/>
    <property type="match status" value="1"/>
</dbReference>
<dbReference type="PIRSF" id="PIRSF001488">
    <property type="entry name" value="Tdi_protein"/>
    <property type="match status" value="1"/>
</dbReference>
<dbReference type="SUPFAM" id="SSF52833">
    <property type="entry name" value="Thioredoxin-like"/>
    <property type="match status" value="1"/>
</dbReference>
<comment type="function">
    <text evidence="1">Involved in disulfide-bond formation. Acts by transferring its disulfide bond to other proteins (By similarity).</text>
</comment>
<comment type="similarity">
    <text evidence="2">Belongs to the thioredoxin family. DsbA subfamily.</text>
</comment>
<proteinExistence type="inferred from homology"/>
<reference key="1">
    <citation type="journal article" date="2003" name="Proc. Natl. Acad. Sci. U.S.A.">
        <title>Reductive genome evolution in Buchnera aphidicola.</title>
        <authorList>
            <person name="van Ham R.C.H.J."/>
            <person name="Kamerbeek J."/>
            <person name="Palacios C."/>
            <person name="Rausell C."/>
            <person name="Abascal F."/>
            <person name="Bastolla U."/>
            <person name="Fernandez J.M."/>
            <person name="Jimenez L."/>
            <person name="Postigo M."/>
            <person name="Silva F.J."/>
            <person name="Tamames J."/>
            <person name="Viguera E."/>
            <person name="Latorre A."/>
            <person name="Valencia A."/>
            <person name="Moran F."/>
            <person name="Moya A."/>
        </authorList>
    </citation>
    <scope>NUCLEOTIDE SEQUENCE [LARGE SCALE GENOMIC DNA]</scope>
    <source>
        <strain>Bp</strain>
    </source>
</reference>
<protein>
    <recommendedName>
        <fullName>Thiol:disulfide interchange protein DsbA</fullName>
    </recommendedName>
</protein>
<sequence length="211" mass="25199">MKNFWMLFLIILLGFDSSNKSFIEGKEYSKVYNKMSDRPPPIIEFFSFLCPYCYDLEKKYNINHYIHKKISKNLIITKYCVNLSNGEFEKQLQKIWAVSVIKKLEKKILIPIFEGIQKKHTITTIPNLINTFLKLTKMNKHDYDFISNSFVVKSFIYKQERIEKFIKLDRVPATIIKGKYIINDMIIQKKSITNFINKYIEIIQFLLNKKL</sequence>
<name>DSBA_BUCBP</name>
<organism>
    <name type="scientific">Buchnera aphidicola subsp. Baizongia pistaciae (strain Bp)</name>
    <dbReference type="NCBI Taxonomy" id="224915"/>
    <lineage>
        <taxon>Bacteria</taxon>
        <taxon>Pseudomonadati</taxon>
        <taxon>Pseudomonadota</taxon>
        <taxon>Gammaproteobacteria</taxon>
        <taxon>Enterobacterales</taxon>
        <taxon>Erwiniaceae</taxon>
        <taxon>Buchnera</taxon>
    </lineage>
</organism>
<evidence type="ECO:0000250" key="1"/>
<evidence type="ECO:0000305" key="2"/>
<gene>
    <name type="primary">dsbA</name>
    <name type="ordered locus">bbp_381</name>
</gene>
<feature type="signal peptide" evidence="1">
    <location>
        <begin position="1"/>
        <end position="19"/>
    </location>
</feature>
<feature type="chain" id="PRO_0000034250" description="Thiol:disulfide interchange protein DsbA">
    <location>
        <begin position="20"/>
        <end position="211"/>
    </location>
</feature>
<feature type="disulfide bond" description="Redox-active" evidence="1">
    <location>
        <begin position="50"/>
        <end position="53"/>
    </location>
</feature>